<gene>
    <name evidence="1" type="primary">valS</name>
    <name type="ordered locus">VP2646</name>
</gene>
<protein>
    <recommendedName>
        <fullName evidence="1">Valine--tRNA ligase</fullName>
        <ecNumber evidence="1">6.1.1.9</ecNumber>
    </recommendedName>
    <alternativeName>
        <fullName evidence="1">Valyl-tRNA synthetase</fullName>
        <shortName evidence="1">ValRS</shortName>
    </alternativeName>
</protein>
<evidence type="ECO:0000255" key="1">
    <source>
        <dbReference type="HAMAP-Rule" id="MF_02004"/>
    </source>
</evidence>
<proteinExistence type="inferred from homology"/>
<feature type="chain" id="PRO_0000224593" description="Valine--tRNA ligase">
    <location>
        <begin position="1"/>
        <end position="952"/>
    </location>
</feature>
<feature type="coiled-coil region" evidence="1">
    <location>
        <begin position="888"/>
        <end position="952"/>
    </location>
</feature>
<feature type="short sequence motif" description="'HIGH' region">
    <location>
        <begin position="42"/>
        <end position="52"/>
    </location>
</feature>
<feature type="short sequence motif" description="'KMSKS' region">
    <location>
        <begin position="554"/>
        <end position="558"/>
    </location>
</feature>
<feature type="binding site" evidence="1">
    <location>
        <position position="557"/>
    </location>
    <ligand>
        <name>ATP</name>
        <dbReference type="ChEBI" id="CHEBI:30616"/>
    </ligand>
</feature>
<dbReference type="EC" id="6.1.1.9" evidence="1"/>
<dbReference type="EMBL" id="BA000031">
    <property type="protein sequence ID" value="BAC60909.1"/>
    <property type="molecule type" value="Genomic_DNA"/>
</dbReference>
<dbReference type="RefSeq" id="NP_799025.1">
    <property type="nucleotide sequence ID" value="NC_004603.1"/>
</dbReference>
<dbReference type="RefSeq" id="WP_005478852.1">
    <property type="nucleotide sequence ID" value="NC_004603.1"/>
</dbReference>
<dbReference type="SMR" id="Q87LG6"/>
<dbReference type="GeneID" id="1190191"/>
<dbReference type="KEGG" id="vpa:VP2646"/>
<dbReference type="PATRIC" id="fig|223926.6.peg.2542"/>
<dbReference type="eggNOG" id="COG0525">
    <property type="taxonomic scope" value="Bacteria"/>
</dbReference>
<dbReference type="HOGENOM" id="CLU_001493_0_2_6"/>
<dbReference type="Proteomes" id="UP000002493">
    <property type="component" value="Chromosome 1"/>
</dbReference>
<dbReference type="GO" id="GO:0005829">
    <property type="term" value="C:cytosol"/>
    <property type="evidence" value="ECO:0007669"/>
    <property type="project" value="TreeGrafter"/>
</dbReference>
<dbReference type="GO" id="GO:0002161">
    <property type="term" value="F:aminoacyl-tRNA deacylase activity"/>
    <property type="evidence" value="ECO:0007669"/>
    <property type="project" value="InterPro"/>
</dbReference>
<dbReference type="GO" id="GO:0005524">
    <property type="term" value="F:ATP binding"/>
    <property type="evidence" value="ECO:0007669"/>
    <property type="project" value="UniProtKB-UniRule"/>
</dbReference>
<dbReference type="GO" id="GO:0004832">
    <property type="term" value="F:valine-tRNA ligase activity"/>
    <property type="evidence" value="ECO:0007669"/>
    <property type="project" value="UniProtKB-UniRule"/>
</dbReference>
<dbReference type="GO" id="GO:0006438">
    <property type="term" value="P:valyl-tRNA aminoacylation"/>
    <property type="evidence" value="ECO:0007669"/>
    <property type="project" value="UniProtKB-UniRule"/>
</dbReference>
<dbReference type="CDD" id="cd07962">
    <property type="entry name" value="Anticodon_Ia_Val"/>
    <property type="match status" value="1"/>
</dbReference>
<dbReference type="CDD" id="cd00817">
    <property type="entry name" value="ValRS_core"/>
    <property type="match status" value="1"/>
</dbReference>
<dbReference type="FunFam" id="1.10.287.380:FF:000001">
    <property type="entry name" value="Valine--tRNA ligase"/>
    <property type="match status" value="1"/>
</dbReference>
<dbReference type="FunFam" id="1.10.730.10:FF:000007">
    <property type="entry name" value="Valine--tRNA ligase"/>
    <property type="match status" value="1"/>
</dbReference>
<dbReference type="FunFam" id="3.40.50.620:FF:000146">
    <property type="entry name" value="Valine--tRNA ligase"/>
    <property type="match status" value="1"/>
</dbReference>
<dbReference type="FunFam" id="3.90.740.10:FF:000003">
    <property type="entry name" value="Valine--tRNA ligase"/>
    <property type="match status" value="1"/>
</dbReference>
<dbReference type="FunFam" id="3.90.740.10:FF:000004">
    <property type="entry name" value="Valine--tRNA ligase"/>
    <property type="match status" value="1"/>
</dbReference>
<dbReference type="FunFam" id="3.40.50.620:FF:000020">
    <property type="entry name" value="Valine--tRNA ligase, mitochondrial"/>
    <property type="match status" value="1"/>
</dbReference>
<dbReference type="Gene3D" id="3.40.50.620">
    <property type="entry name" value="HUPs"/>
    <property type="match status" value="2"/>
</dbReference>
<dbReference type="Gene3D" id="1.10.730.10">
    <property type="entry name" value="Isoleucyl-tRNA Synthetase, Domain 1"/>
    <property type="match status" value="1"/>
</dbReference>
<dbReference type="Gene3D" id="1.10.287.380">
    <property type="entry name" value="Valyl-tRNA synthetase, C-terminal domain"/>
    <property type="match status" value="1"/>
</dbReference>
<dbReference type="Gene3D" id="3.90.740.10">
    <property type="entry name" value="Valyl/Leucyl/Isoleucyl-tRNA synthetase, editing domain"/>
    <property type="match status" value="2"/>
</dbReference>
<dbReference type="HAMAP" id="MF_02004">
    <property type="entry name" value="Val_tRNA_synth_type1"/>
    <property type="match status" value="1"/>
</dbReference>
<dbReference type="InterPro" id="IPR001412">
    <property type="entry name" value="aa-tRNA-synth_I_CS"/>
</dbReference>
<dbReference type="InterPro" id="IPR002300">
    <property type="entry name" value="aa-tRNA-synth_Ia"/>
</dbReference>
<dbReference type="InterPro" id="IPR033705">
    <property type="entry name" value="Anticodon_Ia_Val"/>
</dbReference>
<dbReference type="InterPro" id="IPR013155">
    <property type="entry name" value="M/V/L/I-tRNA-synth_anticd-bd"/>
</dbReference>
<dbReference type="InterPro" id="IPR014729">
    <property type="entry name" value="Rossmann-like_a/b/a_fold"/>
</dbReference>
<dbReference type="InterPro" id="IPR010978">
    <property type="entry name" value="tRNA-bd_arm"/>
</dbReference>
<dbReference type="InterPro" id="IPR009080">
    <property type="entry name" value="tRNAsynth_Ia_anticodon-bd"/>
</dbReference>
<dbReference type="InterPro" id="IPR037118">
    <property type="entry name" value="Val-tRNA_synth_C_sf"/>
</dbReference>
<dbReference type="InterPro" id="IPR019499">
    <property type="entry name" value="Val-tRNA_synth_tRNA-bd"/>
</dbReference>
<dbReference type="InterPro" id="IPR009008">
    <property type="entry name" value="Val/Leu/Ile-tRNA-synth_edit"/>
</dbReference>
<dbReference type="InterPro" id="IPR002303">
    <property type="entry name" value="Valyl-tRNA_ligase"/>
</dbReference>
<dbReference type="NCBIfam" id="NF004349">
    <property type="entry name" value="PRK05729.1"/>
    <property type="match status" value="1"/>
</dbReference>
<dbReference type="NCBIfam" id="TIGR00422">
    <property type="entry name" value="valS"/>
    <property type="match status" value="1"/>
</dbReference>
<dbReference type="PANTHER" id="PTHR11946:SF93">
    <property type="entry name" value="VALINE--TRNA LIGASE, CHLOROPLASTIC_MITOCHONDRIAL 2"/>
    <property type="match status" value="1"/>
</dbReference>
<dbReference type="PANTHER" id="PTHR11946">
    <property type="entry name" value="VALYL-TRNA SYNTHETASES"/>
    <property type="match status" value="1"/>
</dbReference>
<dbReference type="Pfam" id="PF08264">
    <property type="entry name" value="Anticodon_1"/>
    <property type="match status" value="1"/>
</dbReference>
<dbReference type="Pfam" id="PF00133">
    <property type="entry name" value="tRNA-synt_1"/>
    <property type="match status" value="1"/>
</dbReference>
<dbReference type="Pfam" id="PF10458">
    <property type="entry name" value="Val_tRNA-synt_C"/>
    <property type="match status" value="1"/>
</dbReference>
<dbReference type="PRINTS" id="PR00986">
    <property type="entry name" value="TRNASYNTHVAL"/>
</dbReference>
<dbReference type="SUPFAM" id="SSF47323">
    <property type="entry name" value="Anticodon-binding domain of a subclass of class I aminoacyl-tRNA synthetases"/>
    <property type="match status" value="1"/>
</dbReference>
<dbReference type="SUPFAM" id="SSF52374">
    <property type="entry name" value="Nucleotidylyl transferase"/>
    <property type="match status" value="1"/>
</dbReference>
<dbReference type="SUPFAM" id="SSF46589">
    <property type="entry name" value="tRNA-binding arm"/>
    <property type="match status" value="1"/>
</dbReference>
<dbReference type="SUPFAM" id="SSF50677">
    <property type="entry name" value="ValRS/IleRS/LeuRS editing domain"/>
    <property type="match status" value="1"/>
</dbReference>
<dbReference type="PROSITE" id="PS00178">
    <property type="entry name" value="AA_TRNA_LIGASE_I"/>
    <property type="match status" value="1"/>
</dbReference>
<comment type="function">
    <text evidence="1">Catalyzes the attachment of valine to tRNA(Val). As ValRS can inadvertently accommodate and process structurally similar amino acids such as threonine, to avoid such errors, it has a 'posttransfer' editing activity that hydrolyzes mischarged Thr-tRNA(Val) in a tRNA-dependent manner.</text>
</comment>
<comment type="catalytic activity">
    <reaction evidence="1">
        <text>tRNA(Val) + L-valine + ATP = L-valyl-tRNA(Val) + AMP + diphosphate</text>
        <dbReference type="Rhea" id="RHEA:10704"/>
        <dbReference type="Rhea" id="RHEA-COMP:9672"/>
        <dbReference type="Rhea" id="RHEA-COMP:9708"/>
        <dbReference type="ChEBI" id="CHEBI:30616"/>
        <dbReference type="ChEBI" id="CHEBI:33019"/>
        <dbReference type="ChEBI" id="CHEBI:57762"/>
        <dbReference type="ChEBI" id="CHEBI:78442"/>
        <dbReference type="ChEBI" id="CHEBI:78537"/>
        <dbReference type="ChEBI" id="CHEBI:456215"/>
        <dbReference type="EC" id="6.1.1.9"/>
    </reaction>
</comment>
<comment type="subunit">
    <text evidence="1">Monomer.</text>
</comment>
<comment type="subcellular location">
    <subcellularLocation>
        <location evidence="1">Cytoplasm</location>
    </subcellularLocation>
</comment>
<comment type="domain">
    <text evidence="1">ValRS has two distinct active sites: one for aminoacylation and one for editing. The misactivated threonine is translocated from the active site to the editing site.</text>
</comment>
<comment type="domain">
    <text evidence="1">The C-terminal coiled-coil domain is crucial for aminoacylation activity.</text>
</comment>
<comment type="similarity">
    <text evidence="1">Belongs to the class-I aminoacyl-tRNA synthetase family. ValS type 1 subfamily.</text>
</comment>
<reference key="1">
    <citation type="journal article" date="2003" name="Lancet">
        <title>Genome sequence of Vibrio parahaemolyticus: a pathogenic mechanism distinct from that of V. cholerae.</title>
        <authorList>
            <person name="Makino K."/>
            <person name="Oshima K."/>
            <person name="Kurokawa K."/>
            <person name="Yokoyama K."/>
            <person name="Uda T."/>
            <person name="Tagomori K."/>
            <person name="Iijima Y."/>
            <person name="Najima M."/>
            <person name="Nakano M."/>
            <person name="Yamashita A."/>
            <person name="Kubota Y."/>
            <person name="Kimura S."/>
            <person name="Yasunaga T."/>
            <person name="Honda T."/>
            <person name="Shinagawa H."/>
            <person name="Hattori M."/>
            <person name="Iida T."/>
        </authorList>
    </citation>
    <scope>NUCLEOTIDE SEQUENCE [LARGE SCALE GENOMIC DNA]</scope>
    <source>
        <strain>RIMD 2210633</strain>
    </source>
</reference>
<accession>Q87LG6</accession>
<name>SYV_VIBPA</name>
<keyword id="KW-0030">Aminoacyl-tRNA synthetase</keyword>
<keyword id="KW-0067">ATP-binding</keyword>
<keyword id="KW-0175">Coiled coil</keyword>
<keyword id="KW-0963">Cytoplasm</keyword>
<keyword id="KW-0436">Ligase</keyword>
<keyword id="KW-0547">Nucleotide-binding</keyword>
<keyword id="KW-0648">Protein biosynthesis</keyword>
<sequence length="952" mass="108622">MEKTYNPTSIEQALYQTWEEKGYFKPHGDTTKESYSIMIPPPNVTGSLHMGHAFQDTIMDTLIRCERMKGKNTLWQVGTDHAGIATQMVVERKIAAEEGKTKHDYGRDAFIDKIWEWKGESGGTITKQLRRLGASVDWDRERFTMDDGLSNAVQEVFVRLYEDDLIYRGKRLVNWDPKLHTAISDLEVENKDTKGHMWHFRYPLADGVKTADGKDYIVVATTRPETMLGDTGVAVNPEDPRYKDLIGKEIILPIVDRRIPIVGDEHADMEKGTGCVKITPAHDFNDYEVGKRHQLPMINILTFDANIRGAAEVFNTNGEPSDAYSTELPAKYHGMERFAARKAIVAEFDELGLLEEVKDHDLQVPYGDRGGVVIEPMLTDQWYVRTAPLAKTAVEAVENGDIQFVPKQYENMYFSWMRDVQDWCISRQLWWGHRIPAWYDNQGNVYVGRTEEEVRKNNNLESVIELHQDEDVLDTWFSSALWTFGTQGWPEQTDDLKVFHPSDVLVTGFDIIFFWVARMIMMTMHFVKDENGKPQVPFKTVYVTGLIRDENGDKMSKSKGNVLDPIDMIDGIDLESLVEKRTGNMMQPQLAKKIEKNTRKTFENGIEAYGTDALRFTLAAMASTGRDINWDMKRLEGYRNFCNKLWNASRYVMMNTEEQDCGFNGGEIEYSLADKWIESQFELAAKAFNNHIDNFRLDMASNTLYEFIWNQFCDWYLELTKPVLWKGTEAQQRGTRRTLITVLEKTLRLAHPVIPYITETIWQSIKPLVEGVEGETIMLQALPQFDEANFNQEALDDIEWVKAFITSIRNLRAEYDINPGKPLDVMLKAANAEDAARLEANKQVLMSLAKLESVRVLAADEETPACATALVAKSELMIPMAGLIDKDAELARLDGEIKKTHGEIKRIEGKLGNEGFVAKAPEAVVAKEREKLEGYKETLAKLEEQKKTIAAL</sequence>
<organism>
    <name type="scientific">Vibrio parahaemolyticus serotype O3:K6 (strain RIMD 2210633)</name>
    <dbReference type="NCBI Taxonomy" id="223926"/>
    <lineage>
        <taxon>Bacteria</taxon>
        <taxon>Pseudomonadati</taxon>
        <taxon>Pseudomonadota</taxon>
        <taxon>Gammaproteobacteria</taxon>
        <taxon>Vibrionales</taxon>
        <taxon>Vibrionaceae</taxon>
        <taxon>Vibrio</taxon>
    </lineage>
</organism>